<proteinExistence type="inferred from homology"/>
<accession>Q2V3D7</accession>
<feature type="signal peptide" evidence="2">
    <location>
        <begin position="1"/>
        <end position="26"/>
    </location>
</feature>
<feature type="chain" id="PRO_0000379613" description="Putative defensin-like protein 31">
    <location>
        <begin position="27"/>
        <end position="81"/>
    </location>
</feature>
<feature type="disulfide bond" evidence="1">
    <location>
        <begin position="38"/>
        <end position="58"/>
    </location>
</feature>
<feature type="disulfide bond" evidence="1">
    <location>
        <begin position="44"/>
        <end position="70"/>
    </location>
</feature>
<feature type="disulfide bond" evidence="1">
    <location>
        <begin position="48"/>
        <end position="72"/>
    </location>
</feature>
<sequence length="81" mass="8891">MTSSSKCLFFVFLCLAALLTPYLAEAEDRSKLIPIGPCSKIANCNQTCIESQFLGGKCIKWYPDSIKETCACLVKPSITHV</sequence>
<gene>
    <name type="ordered locus">At4g29033</name>
    <name type="ORF">F19B15</name>
    <name type="ORF">F25O24</name>
</gene>
<name>DEF31_ARATH</name>
<dbReference type="EMBL" id="AL078469">
    <property type="status" value="NOT_ANNOTATED_CDS"/>
    <property type="molecule type" value="Genomic_DNA"/>
</dbReference>
<dbReference type="EMBL" id="AL078470">
    <property type="status" value="NOT_ANNOTATED_CDS"/>
    <property type="molecule type" value="Genomic_DNA"/>
</dbReference>
<dbReference type="EMBL" id="AL161574">
    <property type="status" value="NOT_ANNOTATED_CDS"/>
    <property type="molecule type" value="Genomic_DNA"/>
</dbReference>
<dbReference type="EMBL" id="CP002687">
    <property type="protein sequence ID" value="AEE85576.1"/>
    <property type="molecule type" value="Genomic_DNA"/>
</dbReference>
<dbReference type="RefSeq" id="NP_001031742.1">
    <property type="nucleotide sequence ID" value="NM_001036665.2"/>
</dbReference>
<dbReference type="SMR" id="Q2V3D7"/>
<dbReference type="PaxDb" id="3702-AT4G29033.1"/>
<dbReference type="ProteomicsDB" id="224613"/>
<dbReference type="EnsemblPlants" id="AT4G29033.1">
    <property type="protein sequence ID" value="AT4G29033.1"/>
    <property type="gene ID" value="AT4G29033"/>
</dbReference>
<dbReference type="GeneID" id="3770552"/>
<dbReference type="Gramene" id="AT4G29033.1">
    <property type="protein sequence ID" value="AT4G29033.1"/>
    <property type="gene ID" value="AT4G29033"/>
</dbReference>
<dbReference type="KEGG" id="ath:AT4G29033"/>
<dbReference type="Araport" id="AT4G29033"/>
<dbReference type="TAIR" id="AT4G29033"/>
<dbReference type="HOGENOM" id="CLU_198547_0_0_1"/>
<dbReference type="InParanoid" id="Q2V3D7"/>
<dbReference type="OMA" id="CIKWYPD"/>
<dbReference type="OrthoDB" id="1086212at2759"/>
<dbReference type="PRO" id="PR:Q2V3D7"/>
<dbReference type="Proteomes" id="UP000006548">
    <property type="component" value="Chromosome 4"/>
</dbReference>
<dbReference type="ExpressionAtlas" id="Q2V3D7">
    <property type="expression patterns" value="baseline"/>
</dbReference>
<dbReference type="GO" id="GO:0005576">
    <property type="term" value="C:extracellular region"/>
    <property type="evidence" value="ECO:0007669"/>
    <property type="project" value="UniProtKB-SubCell"/>
</dbReference>
<dbReference type="GO" id="GO:0050832">
    <property type="term" value="P:defense response to fungus"/>
    <property type="evidence" value="ECO:0007669"/>
    <property type="project" value="UniProtKB-KW"/>
</dbReference>
<dbReference type="GO" id="GO:0031640">
    <property type="term" value="P:killing of cells of another organism"/>
    <property type="evidence" value="ECO:0007669"/>
    <property type="project" value="UniProtKB-KW"/>
</dbReference>
<dbReference type="Gene3D" id="3.30.30.10">
    <property type="entry name" value="Knottin, scorpion toxin-like"/>
    <property type="match status" value="1"/>
</dbReference>
<dbReference type="InterPro" id="IPR036574">
    <property type="entry name" value="Scorpion_toxin-like_sf"/>
</dbReference>
<evidence type="ECO:0000250" key="1"/>
<evidence type="ECO:0000255" key="2"/>
<evidence type="ECO:0000305" key="3"/>
<reference key="1">
    <citation type="journal article" date="1999" name="Nature">
        <title>Sequence and analysis of chromosome 4 of the plant Arabidopsis thaliana.</title>
        <authorList>
            <person name="Mayer K.F.X."/>
            <person name="Schueller C."/>
            <person name="Wambutt R."/>
            <person name="Murphy G."/>
            <person name="Volckaert G."/>
            <person name="Pohl T."/>
            <person name="Duesterhoeft A."/>
            <person name="Stiekema W."/>
            <person name="Entian K.-D."/>
            <person name="Terryn N."/>
            <person name="Harris B."/>
            <person name="Ansorge W."/>
            <person name="Brandt P."/>
            <person name="Grivell L.A."/>
            <person name="Rieger M."/>
            <person name="Weichselgartner M."/>
            <person name="de Simone V."/>
            <person name="Obermaier B."/>
            <person name="Mache R."/>
            <person name="Mueller M."/>
            <person name="Kreis M."/>
            <person name="Delseny M."/>
            <person name="Puigdomenech P."/>
            <person name="Watson M."/>
            <person name="Schmidtheini T."/>
            <person name="Reichert B."/>
            <person name="Portetelle D."/>
            <person name="Perez-Alonso M."/>
            <person name="Boutry M."/>
            <person name="Bancroft I."/>
            <person name="Vos P."/>
            <person name="Hoheisel J."/>
            <person name="Zimmermann W."/>
            <person name="Wedler H."/>
            <person name="Ridley P."/>
            <person name="Langham S.-A."/>
            <person name="McCullagh B."/>
            <person name="Bilham L."/>
            <person name="Robben J."/>
            <person name="van der Schueren J."/>
            <person name="Grymonprez B."/>
            <person name="Chuang Y.-J."/>
            <person name="Vandenbussche F."/>
            <person name="Braeken M."/>
            <person name="Weltjens I."/>
            <person name="Voet M."/>
            <person name="Bastiaens I."/>
            <person name="Aert R."/>
            <person name="Defoor E."/>
            <person name="Weitzenegger T."/>
            <person name="Bothe G."/>
            <person name="Ramsperger U."/>
            <person name="Hilbert H."/>
            <person name="Braun M."/>
            <person name="Holzer E."/>
            <person name="Brandt A."/>
            <person name="Peters S."/>
            <person name="van Staveren M."/>
            <person name="Dirkse W."/>
            <person name="Mooijman P."/>
            <person name="Klein Lankhorst R."/>
            <person name="Rose M."/>
            <person name="Hauf J."/>
            <person name="Koetter P."/>
            <person name="Berneiser S."/>
            <person name="Hempel S."/>
            <person name="Feldpausch M."/>
            <person name="Lamberth S."/>
            <person name="Van den Daele H."/>
            <person name="De Keyser A."/>
            <person name="Buysshaert C."/>
            <person name="Gielen J."/>
            <person name="Villarroel R."/>
            <person name="De Clercq R."/>
            <person name="van Montagu M."/>
            <person name="Rogers J."/>
            <person name="Cronin A."/>
            <person name="Quail M.A."/>
            <person name="Bray-Allen S."/>
            <person name="Clark L."/>
            <person name="Doggett J."/>
            <person name="Hall S."/>
            <person name="Kay M."/>
            <person name="Lennard N."/>
            <person name="McLay K."/>
            <person name="Mayes R."/>
            <person name="Pettett A."/>
            <person name="Rajandream M.A."/>
            <person name="Lyne M."/>
            <person name="Benes V."/>
            <person name="Rechmann S."/>
            <person name="Borkova D."/>
            <person name="Bloecker H."/>
            <person name="Scharfe M."/>
            <person name="Grimm M."/>
            <person name="Loehnert T.-H."/>
            <person name="Dose S."/>
            <person name="de Haan M."/>
            <person name="Maarse A.C."/>
            <person name="Schaefer M."/>
            <person name="Mueller-Auer S."/>
            <person name="Gabel C."/>
            <person name="Fuchs M."/>
            <person name="Fartmann B."/>
            <person name="Granderath K."/>
            <person name="Dauner D."/>
            <person name="Herzl A."/>
            <person name="Neumann S."/>
            <person name="Argiriou A."/>
            <person name="Vitale D."/>
            <person name="Liguori R."/>
            <person name="Piravandi E."/>
            <person name="Massenet O."/>
            <person name="Quigley F."/>
            <person name="Clabauld G."/>
            <person name="Muendlein A."/>
            <person name="Felber R."/>
            <person name="Schnabl S."/>
            <person name="Hiller R."/>
            <person name="Schmidt W."/>
            <person name="Lecharny A."/>
            <person name="Aubourg S."/>
            <person name="Chefdor F."/>
            <person name="Cooke R."/>
            <person name="Berger C."/>
            <person name="Monfort A."/>
            <person name="Casacuberta E."/>
            <person name="Gibbons T."/>
            <person name="Weber N."/>
            <person name="Vandenbol M."/>
            <person name="Bargues M."/>
            <person name="Terol J."/>
            <person name="Torres A."/>
            <person name="Perez-Perez A."/>
            <person name="Purnelle B."/>
            <person name="Bent E."/>
            <person name="Johnson S."/>
            <person name="Tacon D."/>
            <person name="Jesse T."/>
            <person name="Heijnen L."/>
            <person name="Schwarz S."/>
            <person name="Scholler P."/>
            <person name="Heber S."/>
            <person name="Francs P."/>
            <person name="Bielke C."/>
            <person name="Frishman D."/>
            <person name="Haase D."/>
            <person name="Lemcke K."/>
            <person name="Mewes H.-W."/>
            <person name="Stocker S."/>
            <person name="Zaccaria P."/>
            <person name="Bevan M."/>
            <person name="Wilson R.K."/>
            <person name="de la Bastide M."/>
            <person name="Habermann K."/>
            <person name="Parnell L."/>
            <person name="Dedhia N."/>
            <person name="Gnoj L."/>
            <person name="Schutz K."/>
            <person name="Huang E."/>
            <person name="Spiegel L."/>
            <person name="Sekhon M."/>
            <person name="Murray J."/>
            <person name="Sheet P."/>
            <person name="Cordes M."/>
            <person name="Abu-Threideh J."/>
            <person name="Stoneking T."/>
            <person name="Kalicki J."/>
            <person name="Graves T."/>
            <person name="Harmon G."/>
            <person name="Edwards J."/>
            <person name="Latreille P."/>
            <person name="Courtney L."/>
            <person name="Cloud J."/>
            <person name="Abbott A."/>
            <person name="Scott K."/>
            <person name="Johnson D."/>
            <person name="Minx P."/>
            <person name="Bentley D."/>
            <person name="Fulton B."/>
            <person name="Miller N."/>
            <person name="Greco T."/>
            <person name="Kemp K."/>
            <person name="Kramer J."/>
            <person name="Fulton L."/>
            <person name="Mardis E."/>
            <person name="Dante M."/>
            <person name="Pepin K."/>
            <person name="Hillier L.W."/>
            <person name="Nelson J."/>
            <person name="Spieth J."/>
            <person name="Ryan E."/>
            <person name="Andrews S."/>
            <person name="Geisel C."/>
            <person name="Layman D."/>
            <person name="Du H."/>
            <person name="Ali J."/>
            <person name="Berghoff A."/>
            <person name="Jones K."/>
            <person name="Drone K."/>
            <person name="Cotton M."/>
            <person name="Joshu C."/>
            <person name="Antonoiu B."/>
            <person name="Zidanic M."/>
            <person name="Strong C."/>
            <person name="Sun H."/>
            <person name="Lamar B."/>
            <person name="Yordan C."/>
            <person name="Ma P."/>
            <person name="Zhong J."/>
            <person name="Preston R."/>
            <person name="Vil D."/>
            <person name="Shekher M."/>
            <person name="Matero A."/>
            <person name="Shah R."/>
            <person name="Swaby I.K."/>
            <person name="O'Shaughnessy A."/>
            <person name="Rodriguez M."/>
            <person name="Hoffman J."/>
            <person name="Till S."/>
            <person name="Granat S."/>
            <person name="Shohdy N."/>
            <person name="Hasegawa A."/>
            <person name="Hameed A."/>
            <person name="Lodhi M."/>
            <person name="Johnson A."/>
            <person name="Chen E."/>
            <person name="Marra M.A."/>
            <person name="Martienssen R."/>
            <person name="McCombie W.R."/>
        </authorList>
    </citation>
    <scope>NUCLEOTIDE SEQUENCE [LARGE SCALE GENOMIC DNA]</scope>
    <source>
        <strain>cv. Columbia</strain>
    </source>
</reference>
<reference key="2">
    <citation type="journal article" date="2017" name="Plant J.">
        <title>Araport11: a complete reannotation of the Arabidopsis thaliana reference genome.</title>
        <authorList>
            <person name="Cheng C.Y."/>
            <person name="Krishnakumar V."/>
            <person name="Chan A.P."/>
            <person name="Thibaud-Nissen F."/>
            <person name="Schobel S."/>
            <person name="Town C.D."/>
        </authorList>
    </citation>
    <scope>GENOME REANNOTATION</scope>
    <source>
        <strain>cv. Columbia</strain>
    </source>
</reference>
<reference key="3">
    <citation type="journal article" date="2005" name="Plant Physiol.">
        <title>Genome organization of more than 300 defensin-like genes in Arabidopsis.</title>
        <authorList>
            <person name="Silverstein K.A.T."/>
            <person name="Graham M.A."/>
            <person name="Paape T.D."/>
            <person name="VandenBosch K.A."/>
        </authorList>
    </citation>
    <scope>GENE FAMILY</scope>
</reference>
<keyword id="KW-0929">Antimicrobial</keyword>
<keyword id="KW-1015">Disulfide bond</keyword>
<keyword id="KW-0295">Fungicide</keyword>
<keyword id="KW-0611">Plant defense</keyword>
<keyword id="KW-1185">Reference proteome</keyword>
<keyword id="KW-0964">Secreted</keyword>
<keyword id="KW-0732">Signal</keyword>
<comment type="subcellular location">
    <subcellularLocation>
        <location evidence="1">Secreted</location>
    </subcellularLocation>
</comment>
<comment type="similarity">
    <text evidence="3">Belongs to the DEFL family.</text>
</comment>
<comment type="caution">
    <text evidence="3">Lacks 1 of the 4 disulfide bonds, which are conserved features of the family.</text>
</comment>
<organism>
    <name type="scientific">Arabidopsis thaliana</name>
    <name type="common">Mouse-ear cress</name>
    <dbReference type="NCBI Taxonomy" id="3702"/>
    <lineage>
        <taxon>Eukaryota</taxon>
        <taxon>Viridiplantae</taxon>
        <taxon>Streptophyta</taxon>
        <taxon>Embryophyta</taxon>
        <taxon>Tracheophyta</taxon>
        <taxon>Spermatophyta</taxon>
        <taxon>Magnoliopsida</taxon>
        <taxon>eudicotyledons</taxon>
        <taxon>Gunneridae</taxon>
        <taxon>Pentapetalae</taxon>
        <taxon>rosids</taxon>
        <taxon>malvids</taxon>
        <taxon>Brassicales</taxon>
        <taxon>Brassicaceae</taxon>
        <taxon>Camelineae</taxon>
        <taxon>Arabidopsis</taxon>
    </lineage>
</organism>
<protein>
    <recommendedName>
        <fullName>Putative defensin-like protein 31</fullName>
    </recommendedName>
</protein>